<organism>
    <name type="scientific">Gemmatimonas aurantiaca (strain DSM 14586 / JCM 11422 / NBRC 100505 / T-27)</name>
    <dbReference type="NCBI Taxonomy" id="379066"/>
    <lineage>
        <taxon>Bacteria</taxon>
        <taxon>Pseudomonadati</taxon>
        <taxon>Gemmatimonadota</taxon>
        <taxon>Gemmatimonadia</taxon>
        <taxon>Gemmatimonadales</taxon>
        <taxon>Gemmatimonadaceae</taxon>
        <taxon>Gemmatimonas</taxon>
    </lineage>
</organism>
<gene>
    <name evidence="1" type="primary">uvrC</name>
    <name type="ordered locus">GAU_1598</name>
</gene>
<sequence>MPVAQKLPHLPESPGVYLWKDVEGQVLYVGKAKRLRSRVRSYWAQEHESSPKTRAMVRKVRDLETIVVPSEAHALILEATLIKEYHPRFNIALRDDKSYPYIRVTVNEPFPRVMVTRRLLDDGARYFGPYTDVGAMRRALNVVKRIFTVRSCHYALPGEAPERPCLDYSIKRCKAPCVGYQSREDYRAMIDEVVWFLDGRTSDVMHHVRERMLDASERLDFERAAELRDALAHLEKMESPSVVLEVEGGDRDVVGYARDGEDACVAVMRIRGGKLLARDHRLLEHAEDEEDGAVLGACLAQWYRTAEARAGELLVPFDFEDRESLEASLDGTHIRVPQRGPRRALVDLADQNARHLLEEFKLAALEADERAVDPVYELQRELGLPRLPRSLVCFDISHAQGTDVVASAVFFENGRPKRSEYRKFKIKVFEGNDDFRSMHEVVTRYFRRRLDEEKPLPDLAVIDGGKGQLGAARAALDELGAPQIGLISLAKREEEIFQYGRPDPVRLPRRSPALRMLQQARDEAHRFAITFQRQKRAARTITSELLKIPGVGPTKRRALLHTFGSVQGVREASVEQIAAIPGFGAASARRLLEALGVAVPDVSAPTIDSPSDPPLS</sequence>
<evidence type="ECO:0000255" key="1">
    <source>
        <dbReference type="HAMAP-Rule" id="MF_00203"/>
    </source>
</evidence>
<keyword id="KW-0963">Cytoplasm</keyword>
<keyword id="KW-0227">DNA damage</keyword>
<keyword id="KW-0228">DNA excision</keyword>
<keyword id="KW-0234">DNA repair</keyword>
<keyword id="KW-0267">Excision nuclease</keyword>
<keyword id="KW-1185">Reference proteome</keyword>
<keyword id="KW-0742">SOS response</keyword>
<accession>C1A8T0</accession>
<name>UVRC_GEMAT</name>
<feature type="chain" id="PRO_1000204121" description="UvrABC system protein C">
    <location>
        <begin position="1"/>
        <end position="616"/>
    </location>
</feature>
<feature type="domain" description="GIY-YIG" evidence="1">
    <location>
        <begin position="12"/>
        <end position="91"/>
    </location>
</feature>
<feature type="domain" description="UVR" evidence="1">
    <location>
        <begin position="202"/>
        <end position="237"/>
    </location>
</feature>
<dbReference type="EMBL" id="AP009153">
    <property type="protein sequence ID" value="BAH38640.1"/>
    <property type="molecule type" value="Genomic_DNA"/>
</dbReference>
<dbReference type="SMR" id="C1A8T0"/>
<dbReference type="STRING" id="379066.GAU_1598"/>
<dbReference type="KEGG" id="gau:GAU_1598"/>
<dbReference type="eggNOG" id="COG0322">
    <property type="taxonomic scope" value="Bacteria"/>
</dbReference>
<dbReference type="HOGENOM" id="CLU_014841_3_2_0"/>
<dbReference type="Proteomes" id="UP000002209">
    <property type="component" value="Chromosome"/>
</dbReference>
<dbReference type="GO" id="GO:0005737">
    <property type="term" value="C:cytoplasm"/>
    <property type="evidence" value="ECO:0007669"/>
    <property type="project" value="UniProtKB-SubCell"/>
</dbReference>
<dbReference type="GO" id="GO:0009380">
    <property type="term" value="C:excinuclease repair complex"/>
    <property type="evidence" value="ECO:0007669"/>
    <property type="project" value="InterPro"/>
</dbReference>
<dbReference type="GO" id="GO:0003677">
    <property type="term" value="F:DNA binding"/>
    <property type="evidence" value="ECO:0007669"/>
    <property type="project" value="UniProtKB-UniRule"/>
</dbReference>
<dbReference type="GO" id="GO:0009381">
    <property type="term" value="F:excinuclease ABC activity"/>
    <property type="evidence" value="ECO:0007669"/>
    <property type="project" value="UniProtKB-UniRule"/>
</dbReference>
<dbReference type="GO" id="GO:0006289">
    <property type="term" value="P:nucleotide-excision repair"/>
    <property type="evidence" value="ECO:0007669"/>
    <property type="project" value="UniProtKB-UniRule"/>
</dbReference>
<dbReference type="GO" id="GO:0009432">
    <property type="term" value="P:SOS response"/>
    <property type="evidence" value="ECO:0007669"/>
    <property type="project" value="UniProtKB-UniRule"/>
</dbReference>
<dbReference type="CDD" id="cd10434">
    <property type="entry name" value="GIY-YIG_UvrC_Cho"/>
    <property type="match status" value="1"/>
</dbReference>
<dbReference type="FunFam" id="3.40.1440.10:FF:000001">
    <property type="entry name" value="UvrABC system protein C"/>
    <property type="match status" value="1"/>
</dbReference>
<dbReference type="Gene3D" id="1.10.150.20">
    <property type="entry name" value="5' to 3' exonuclease, C-terminal subdomain"/>
    <property type="match status" value="1"/>
</dbReference>
<dbReference type="Gene3D" id="3.40.1440.10">
    <property type="entry name" value="GIY-YIG endonuclease"/>
    <property type="match status" value="1"/>
</dbReference>
<dbReference type="Gene3D" id="4.10.860.10">
    <property type="entry name" value="UVR domain"/>
    <property type="match status" value="1"/>
</dbReference>
<dbReference type="Gene3D" id="3.30.420.340">
    <property type="entry name" value="UvrC, RNAse H endonuclease domain"/>
    <property type="match status" value="1"/>
</dbReference>
<dbReference type="HAMAP" id="MF_00203">
    <property type="entry name" value="UvrC"/>
    <property type="match status" value="1"/>
</dbReference>
<dbReference type="InterPro" id="IPR000305">
    <property type="entry name" value="GIY-YIG_endonuc"/>
</dbReference>
<dbReference type="InterPro" id="IPR035901">
    <property type="entry name" value="GIY-YIG_endonuc_sf"/>
</dbReference>
<dbReference type="InterPro" id="IPR047296">
    <property type="entry name" value="GIY-YIG_UvrC_Cho"/>
</dbReference>
<dbReference type="InterPro" id="IPR003583">
    <property type="entry name" value="Hlx-hairpin-Hlx_DNA-bd_motif"/>
</dbReference>
<dbReference type="InterPro" id="IPR010994">
    <property type="entry name" value="RuvA_2-like"/>
</dbReference>
<dbReference type="InterPro" id="IPR001943">
    <property type="entry name" value="UVR_dom"/>
</dbReference>
<dbReference type="InterPro" id="IPR036876">
    <property type="entry name" value="UVR_dom_sf"/>
</dbReference>
<dbReference type="InterPro" id="IPR050066">
    <property type="entry name" value="UvrABC_protein_C"/>
</dbReference>
<dbReference type="InterPro" id="IPR004791">
    <property type="entry name" value="UvrC"/>
</dbReference>
<dbReference type="InterPro" id="IPR001162">
    <property type="entry name" value="UvrC_RNase_H_dom"/>
</dbReference>
<dbReference type="InterPro" id="IPR038476">
    <property type="entry name" value="UvrC_RNase_H_dom_sf"/>
</dbReference>
<dbReference type="NCBIfam" id="NF001824">
    <property type="entry name" value="PRK00558.1-5"/>
    <property type="match status" value="1"/>
</dbReference>
<dbReference type="NCBIfam" id="TIGR00194">
    <property type="entry name" value="uvrC"/>
    <property type="match status" value="1"/>
</dbReference>
<dbReference type="PANTHER" id="PTHR30562:SF1">
    <property type="entry name" value="UVRABC SYSTEM PROTEIN C"/>
    <property type="match status" value="1"/>
</dbReference>
<dbReference type="PANTHER" id="PTHR30562">
    <property type="entry name" value="UVRC/OXIDOREDUCTASE"/>
    <property type="match status" value="1"/>
</dbReference>
<dbReference type="Pfam" id="PF01541">
    <property type="entry name" value="GIY-YIG"/>
    <property type="match status" value="1"/>
</dbReference>
<dbReference type="Pfam" id="PF14520">
    <property type="entry name" value="HHH_5"/>
    <property type="match status" value="1"/>
</dbReference>
<dbReference type="Pfam" id="PF02151">
    <property type="entry name" value="UVR"/>
    <property type="match status" value="1"/>
</dbReference>
<dbReference type="Pfam" id="PF22920">
    <property type="entry name" value="UvrC_RNaseH"/>
    <property type="match status" value="1"/>
</dbReference>
<dbReference type="Pfam" id="PF08459">
    <property type="entry name" value="UvrC_RNaseH_dom"/>
    <property type="match status" value="1"/>
</dbReference>
<dbReference type="SMART" id="SM00465">
    <property type="entry name" value="GIYc"/>
    <property type="match status" value="1"/>
</dbReference>
<dbReference type="SMART" id="SM00278">
    <property type="entry name" value="HhH1"/>
    <property type="match status" value="2"/>
</dbReference>
<dbReference type="SUPFAM" id="SSF46600">
    <property type="entry name" value="C-terminal UvrC-binding domain of UvrB"/>
    <property type="match status" value="1"/>
</dbReference>
<dbReference type="SUPFAM" id="SSF82771">
    <property type="entry name" value="GIY-YIG endonuclease"/>
    <property type="match status" value="1"/>
</dbReference>
<dbReference type="SUPFAM" id="SSF47781">
    <property type="entry name" value="RuvA domain 2-like"/>
    <property type="match status" value="1"/>
</dbReference>
<dbReference type="PROSITE" id="PS50164">
    <property type="entry name" value="GIY_YIG"/>
    <property type="match status" value="1"/>
</dbReference>
<dbReference type="PROSITE" id="PS50151">
    <property type="entry name" value="UVR"/>
    <property type="match status" value="1"/>
</dbReference>
<dbReference type="PROSITE" id="PS50165">
    <property type="entry name" value="UVRC"/>
    <property type="match status" value="1"/>
</dbReference>
<protein>
    <recommendedName>
        <fullName evidence="1">UvrABC system protein C</fullName>
        <shortName evidence="1">Protein UvrC</shortName>
    </recommendedName>
    <alternativeName>
        <fullName evidence="1">Excinuclease ABC subunit C</fullName>
    </alternativeName>
</protein>
<proteinExistence type="inferred from homology"/>
<reference key="1">
    <citation type="submission" date="2006-03" db="EMBL/GenBank/DDBJ databases">
        <title>Complete genome sequence of Gemmatimonas aurantiaca T-27 that represents a novel phylum Gemmatimonadetes.</title>
        <authorList>
            <person name="Takasaki K."/>
            <person name="Ichikawa N."/>
            <person name="Miura H."/>
            <person name="Matsushita S."/>
            <person name="Watanabe Y."/>
            <person name="Oguchi A."/>
            <person name="Ankai A."/>
            <person name="Yashiro I."/>
            <person name="Takahashi M."/>
            <person name="Terui Y."/>
            <person name="Fukui S."/>
            <person name="Yokoyama H."/>
            <person name="Tanikawa S."/>
            <person name="Hanada S."/>
            <person name="Kamagata Y."/>
            <person name="Fujita N."/>
        </authorList>
    </citation>
    <scope>NUCLEOTIDE SEQUENCE [LARGE SCALE GENOMIC DNA]</scope>
    <source>
        <strain>DSM 14586 / JCM 11422 / NBRC 100505 / T-27</strain>
    </source>
</reference>
<comment type="function">
    <text evidence="1">The UvrABC repair system catalyzes the recognition and processing of DNA lesions. UvrC both incises the 5' and 3' sides of the lesion. The N-terminal half is responsible for the 3' incision and the C-terminal half is responsible for the 5' incision.</text>
</comment>
<comment type="subunit">
    <text evidence="1">Interacts with UvrB in an incision complex.</text>
</comment>
<comment type="subcellular location">
    <subcellularLocation>
        <location evidence="1">Cytoplasm</location>
    </subcellularLocation>
</comment>
<comment type="similarity">
    <text evidence="1">Belongs to the UvrC family.</text>
</comment>